<organism>
    <name type="scientific">Danio rerio</name>
    <name type="common">Zebrafish</name>
    <name type="synonym">Brachydanio rerio</name>
    <dbReference type="NCBI Taxonomy" id="7955"/>
    <lineage>
        <taxon>Eukaryota</taxon>
        <taxon>Metazoa</taxon>
        <taxon>Chordata</taxon>
        <taxon>Craniata</taxon>
        <taxon>Vertebrata</taxon>
        <taxon>Euteleostomi</taxon>
        <taxon>Actinopterygii</taxon>
        <taxon>Neopterygii</taxon>
        <taxon>Teleostei</taxon>
        <taxon>Ostariophysi</taxon>
        <taxon>Cypriniformes</taxon>
        <taxon>Danionidae</taxon>
        <taxon>Danioninae</taxon>
        <taxon>Danio</taxon>
    </lineage>
</organism>
<protein>
    <recommendedName>
        <fullName evidence="3">Large ribosomal subunit protein eL34</fullName>
    </recommendedName>
    <alternativeName>
        <fullName>60S ribosomal protein L34</fullName>
    </alternativeName>
</protein>
<name>RL34_DANRE</name>
<evidence type="ECO:0000250" key="1">
    <source>
        <dbReference type="UniProtKB" id="P49207"/>
    </source>
</evidence>
<evidence type="ECO:0000250" key="2">
    <source>
        <dbReference type="UniProtKB" id="Q29223"/>
    </source>
</evidence>
<evidence type="ECO:0000305" key="3"/>
<comment type="function">
    <text evidence="1">Component of the large ribosomal subunit. The ribosome is a large ribonucleoprotein complex responsible for the synthesis of proteins in the cell.</text>
</comment>
<comment type="subunit">
    <text evidence="1">Component of the large ribosomal subunit.</text>
</comment>
<comment type="subcellular location">
    <subcellularLocation>
        <location evidence="1">Cytoplasm</location>
        <location evidence="1">Cytosol</location>
    </subcellularLocation>
    <subcellularLocation>
        <location evidence="1">Cytoplasm</location>
    </subcellularLocation>
    <subcellularLocation>
        <location evidence="2">Endoplasmic reticulum</location>
    </subcellularLocation>
    <text evidence="1 2">Detected on cytosolic polysomes (By similarity). Detected in ribosomes that are associated with the rough endoplasmic reticulum (By similarity).</text>
</comment>
<comment type="similarity">
    <text evidence="3">Belongs to the eukaryotic ribosomal protein eL34 family.</text>
</comment>
<keyword id="KW-0002">3D-structure</keyword>
<keyword id="KW-0963">Cytoplasm</keyword>
<keyword id="KW-0256">Endoplasmic reticulum</keyword>
<keyword id="KW-1185">Reference proteome</keyword>
<keyword id="KW-0687">Ribonucleoprotein</keyword>
<keyword id="KW-0689">Ribosomal protein</keyword>
<feature type="initiator methionine" description="Removed" evidence="1">
    <location>
        <position position="1"/>
    </location>
</feature>
<feature type="chain" id="PRO_0000131835" description="Large ribosomal subunit protein eL34">
    <location>
        <begin position="2"/>
        <end position="117"/>
    </location>
</feature>
<accession>Q7ZWJ7</accession>
<sequence length="117" mass="13369">MVQRLTYRRRLSYNTASNKTRLSRTPGNRIVYLYTKKTGKSPKSACGICPGRLRGIRAVRPQVLMRLSKTKKHVSRAYGGSMCAKCVRDRIKRAFLIEEQKIVVKVLKAQAQTQKSK</sequence>
<gene>
    <name type="primary">rpl34</name>
</gene>
<reference key="1">
    <citation type="submission" date="2003-11" db="EMBL/GenBank/DDBJ databases">
        <authorList>
            <consortium name="NIH - Zebrafish Gene Collection (ZGC) project"/>
        </authorList>
    </citation>
    <scope>NUCLEOTIDE SEQUENCE [LARGE SCALE MRNA]</scope>
</reference>
<dbReference type="EMBL" id="BC049023">
    <property type="protein sequence ID" value="AAH49023.1"/>
    <property type="molecule type" value="mRNA"/>
</dbReference>
<dbReference type="EMBL" id="BC062280">
    <property type="protein sequence ID" value="AAH62280.1"/>
    <property type="molecule type" value="mRNA"/>
</dbReference>
<dbReference type="RefSeq" id="NP_957416.1">
    <property type="nucleotide sequence ID" value="NM_201122.1"/>
</dbReference>
<dbReference type="RefSeq" id="XP_005166592.1">
    <property type="nucleotide sequence ID" value="XM_005166535.4"/>
</dbReference>
<dbReference type="RefSeq" id="XP_068078302.1">
    <property type="nucleotide sequence ID" value="XM_068222201.1"/>
</dbReference>
<dbReference type="PDB" id="7OYA">
    <property type="method" value="EM"/>
    <property type="resolution" value="3.20 A"/>
    <property type="chains" value="g1=1-117"/>
</dbReference>
<dbReference type="PDB" id="7OYB">
    <property type="method" value="EM"/>
    <property type="resolution" value="2.40 A"/>
    <property type="chains" value="g1=1-117"/>
</dbReference>
<dbReference type="PDBsum" id="7OYA"/>
<dbReference type="PDBsum" id="7OYB"/>
<dbReference type="EMDB" id="EMD-13111"/>
<dbReference type="EMDB" id="EMD-13112"/>
<dbReference type="SMR" id="Q7ZWJ7"/>
<dbReference type="FunCoup" id="Q7ZWJ7">
    <property type="interactions" value="2013"/>
</dbReference>
<dbReference type="IntAct" id="Q7ZWJ7">
    <property type="interactions" value="1"/>
</dbReference>
<dbReference type="MINT" id="Q7ZWJ7"/>
<dbReference type="STRING" id="7955.ENSDARP00000040770"/>
<dbReference type="PaxDb" id="7955-ENSDARP00000108075"/>
<dbReference type="Ensembl" id="ENSDART00000040771">
    <property type="protein sequence ID" value="ENSDARP00000040770"/>
    <property type="gene ID" value="ENSDARG00000029500"/>
</dbReference>
<dbReference type="Ensembl" id="ENSDART00000123520">
    <property type="protein sequence ID" value="ENSDARP00000108075"/>
    <property type="gene ID" value="ENSDARG00000029500"/>
</dbReference>
<dbReference type="Ensembl" id="ENSDART00000181067">
    <property type="protein sequence ID" value="ENSDARP00000155419"/>
    <property type="gene ID" value="ENSDARG00000029500"/>
</dbReference>
<dbReference type="GeneID" id="394097"/>
<dbReference type="KEGG" id="dre:394097"/>
<dbReference type="AGR" id="ZFIN:ZDB-GENE-040426-1033"/>
<dbReference type="CTD" id="6164"/>
<dbReference type="ZFIN" id="ZDB-GENE-040426-1033">
    <property type="gene designation" value="rpl34"/>
</dbReference>
<dbReference type="eggNOG" id="KOG1790">
    <property type="taxonomic scope" value="Eukaryota"/>
</dbReference>
<dbReference type="HOGENOM" id="CLU_118652_0_1_1"/>
<dbReference type="InParanoid" id="Q7ZWJ7"/>
<dbReference type="OMA" id="RCHKCVR"/>
<dbReference type="OrthoDB" id="277449at2759"/>
<dbReference type="PhylomeDB" id="Q7ZWJ7"/>
<dbReference type="TreeFam" id="TF314326"/>
<dbReference type="Reactome" id="R-DRE-156827">
    <property type="pathway name" value="L13a-mediated translational silencing of Ceruloplasmin expression"/>
</dbReference>
<dbReference type="Reactome" id="R-DRE-1799339">
    <property type="pathway name" value="SRP-dependent cotranslational protein targeting to membrane"/>
</dbReference>
<dbReference type="Reactome" id="R-DRE-72689">
    <property type="pathway name" value="Formation of a pool of free 40S subunits"/>
</dbReference>
<dbReference type="Reactome" id="R-DRE-975956">
    <property type="pathway name" value="Nonsense Mediated Decay (NMD) independent of the Exon Junction Complex (EJC)"/>
</dbReference>
<dbReference type="Reactome" id="R-DRE-975957">
    <property type="pathway name" value="Nonsense Mediated Decay (NMD) enhanced by the Exon Junction Complex (EJC)"/>
</dbReference>
<dbReference type="PRO" id="PR:Q7ZWJ7"/>
<dbReference type="Proteomes" id="UP000000437">
    <property type="component" value="Chromosome 7"/>
</dbReference>
<dbReference type="Bgee" id="ENSDARG00000029500">
    <property type="expression patterns" value="Expressed in pharyngeal gill and 33 other cell types or tissues"/>
</dbReference>
<dbReference type="GO" id="GO:0022625">
    <property type="term" value="C:cytosolic large ribosomal subunit"/>
    <property type="evidence" value="ECO:0000318"/>
    <property type="project" value="GO_Central"/>
</dbReference>
<dbReference type="GO" id="GO:0005783">
    <property type="term" value="C:endoplasmic reticulum"/>
    <property type="evidence" value="ECO:0007669"/>
    <property type="project" value="UniProtKB-SubCell"/>
</dbReference>
<dbReference type="GO" id="GO:0003735">
    <property type="term" value="F:structural constituent of ribosome"/>
    <property type="evidence" value="ECO:0000318"/>
    <property type="project" value="GO_Central"/>
</dbReference>
<dbReference type="GO" id="GO:0006412">
    <property type="term" value="P:translation"/>
    <property type="evidence" value="ECO:0007669"/>
    <property type="project" value="InterPro"/>
</dbReference>
<dbReference type="Gene3D" id="6.20.340.10">
    <property type="match status" value="1"/>
</dbReference>
<dbReference type="Gene3D" id="6.20.370.70">
    <property type="match status" value="1"/>
</dbReference>
<dbReference type="InterPro" id="IPR008195">
    <property type="entry name" value="Ribosomal_eL34"/>
</dbReference>
<dbReference type="InterPro" id="IPR038562">
    <property type="entry name" value="Ribosomal_eL34_C_sf"/>
</dbReference>
<dbReference type="InterPro" id="IPR018065">
    <property type="entry name" value="Ribosomal_eL34_CS"/>
</dbReference>
<dbReference type="PANTHER" id="PTHR46595">
    <property type="entry name" value="60S RIBOSOMAL PROTEIN L34"/>
    <property type="match status" value="1"/>
</dbReference>
<dbReference type="Pfam" id="PF01199">
    <property type="entry name" value="Ribosomal_L34e"/>
    <property type="match status" value="1"/>
</dbReference>
<dbReference type="PRINTS" id="PR01250">
    <property type="entry name" value="RIBOSOMALL34"/>
</dbReference>
<dbReference type="PROSITE" id="PS01145">
    <property type="entry name" value="RIBOSOMAL_L34E"/>
    <property type="match status" value="1"/>
</dbReference>
<proteinExistence type="evidence at protein level"/>